<proteinExistence type="evidence at transcript level"/>
<organism>
    <name type="scientific">Arabidopsis thaliana</name>
    <name type="common">Mouse-ear cress</name>
    <dbReference type="NCBI Taxonomy" id="3702"/>
    <lineage>
        <taxon>Eukaryota</taxon>
        <taxon>Viridiplantae</taxon>
        <taxon>Streptophyta</taxon>
        <taxon>Embryophyta</taxon>
        <taxon>Tracheophyta</taxon>
        <taxon>Spermatophyta</taxon>
        <taxon>Magnoliopsida</taxon>
        <taxon>eudicotyledons</taxon>
        <taxon>Gunneridae</taxon>
        <taxon>Pentapetalae</taxon>
        <taxon>rosids</taxon>
        <taxon>malvids</taxon>
        <taxon>Brassicales</taxon>
        <taxon>Brassicaceae</taxon>
        <taxon>Camelineae</taxon>
        <taxon>Arabidopsis</taxon>
    </lineage>
</organism>
<name>KCY1_ARATH</name>
<evidence type="ECO:0000255" key="1">
    <source>
        <dbReference type="HAMAP-Rule" id="MF_03172"/>
    </source>
</evidence>
<evidence type="ECO:0000305" key="2"/>
<dbReference type="EC" id="2.7.4.14" evidence="1"/>
<dbReference type="EMBL" id="AL138658">
    <property type="protein sequence ID" value="CAB75933.1"/>
    <property type="status" value="ALT_SEQ"/>
    <property type="molecule type" value="Genomic_DNA"/>
</dbReference>
<dbReference type="EMBL" id="CP002686">
    <property type="protein sequence ID" value="AEE80020.1"/>
    <property type="molecule type" value="Genomic_DNA"/>
</dbReference>
<dbReference type="EMBL" id="CP002686">
    <property type="protein sequence ID" value="AEE80021.1"/>
    <property type="molecule type" value="Genomic_DNA"/>
</dbReference>
<dbReference type="EMBL" id="AY072358">
    <property type="protein sequence ID" value="AAL62350.1"/>
    <property type="molecule type" value="mRNA"/>
</dbReference>
<dbReference type="EMBL" id="AY114727">
    <property type="protein sequence ID" value="AAM48046.1"/>
    <property type="molecule type" value="mRNA"/>
</dbReference>
<dbReference type="PIR" id="T47842">
    <property type="entry name" value="T47842"/>
</dbReference>
<dbReference type="RefSeq" id="NP_567093.1">
    <property type="nucleotide sequence ID" value="NM_115881.4"/>
</dbReference>
<dbReference type="RefSeq" id="NP_850726.1">
    <property type="nucleotide sequence ID" value="NM_180395.2"/>
</dbReference>
<dbReference type="SMR" id="Q8VY84"/>
<dbReference type="FunCoup" id="Q8VY84">
    <property type="interactions" value="2494"/>
</dbReference>
<dbReference type="STRING" id="3702.Q8VY84"/>
<dbReference type="iPTMnet" id="Q8VY84"/>
<dbReference type="PaxDb" id="3702-AT3G60180.1"/>
<dbReference type="ProteomicsDB" id="230120"/>
<dbReference type="EnsemblPlants" id="AT3G60180.1">
    <property type="protein sequence ID" value="AT3G60180.1"/>
    <property type="gene ID" value="AT3G60180"/>
</dbReference>
<dbReference type="EnsemblPlants" id="AT3G60180.2">
    <property type="protein sequence ID" value="AT3G60180.2"/>
    <property type="gene ID" value="AT3G60180"/>
</dbReference>
<dbReference type="GeneID" id="825188"/>
<dbReference type="Gramene" id="AT3G60180.1">
    <property type="protein sequence ID" value="AT3G60180.1"/>
    <property type="gene ID" value="AT3G60180"/>
</dbReference>
<dbReference type="Gramene" id="AT3G60180.2">
    <property type="protein sequence ID" value="AT3G60180.2"/>
    <property type="gene ID" value="AT3G60180"/>
</dbReference>
<dbReference type="KEGG" id="ath:AT3G60180"/>
<dbReference type="Araport" id="AT3G60180"/>
<dbReference type="TAIR" id="AT3G60180"/>
<dbReference type="eggNOG" id="KOG3079">
    <property type="taxonomic scope" value="Eukaryota"/>
</dbReference>
<dbReference type="HOGENOM" id="CLU_032354_0_1_1"/>
<dbReference type="InParanoid" id="Q8VY84"/>
<dbReference type="OMA" id="SPRWKKS"/>
<dbReference type="OrthoDB" id="442176at2759"/>
<dbReference type="PhylomeDB" id="Q8VY84"/>
<dbReference type="PRO" id="PR:Q8VY84"/>
<dbReference type="Proteomes" id="UP000006548">
    <property type="component" value="Chromosome 3"/>
</dbReference>
<dbReference type="ExpressionAtlas" id="Q8VY84">
    <property type="expression patterns" value="baseline and differential"/>
</dbReference>
<dbReference type="GO" id="GO:0005737">
    <property type="term" value="C:cytoplasm"/>
    <property type="evidence" value="ECO:0007005"/>
    <property type="project" value="TAIR"/>
</dbReference>
<dbReference type="GO" id="GO:0005634">
    <property type="term" value="C:nucleus"/>
    <property type="evidence" value="ECO:0007005"/>
    <property type="project" value="TAIR"/>
</dbReference>
<dbReference type="GO" id="GO:0005524">
    <property type="term" value="F:ATP binding"/>
    <property type="evidence" value="ECO:0007669"/>
    <property type="project" value="UniProtKB-KW"/>
</dbReference>
<dbReference type="GO" id="GO:0036430">
    <property type="term" value="F:CMP kinase activity"/>
    <property type="evidence" value="ECO:0007669"/>
    <property type="project" value="RHEA"/>
</dbReference>
<dbReference type="GO" id="GO:0036431">
    <property type="term" value="F:dCMP kinase activity"/>
    <property type="evidence" value="ECO:0007669"/>
    <property type="project" value="RHEA"/>
</dbReference>
<dbReference type="GO" id="GO:0033862">
    <property type="term" value="F:UMP kinase activity"/>
    <property type="evidence" value="ECO:0007669"/>
    <property type="project" value="RHEA"/>
</dbReference>
<dbReference type="GO" id="GO:0006207">
    <property type="term" value="P:'de novo' pyrimidine nucleobase biosynthetic process"/>
    <property type="evidence" value="ECO:0007669"/>
    <property type="project" value="InterPro"/>
</dbReference>
<dbReference type="GO" id="GO:0006221">
    <property type="term" value="P:pyrimidine nucleotide biosynthetic process"/>
    <property type="evidence" value="ECO:0007669"/>
    <property type="project" value="UniProtKB-UniRule"/>
</dbReference>
<dbReference type="CDD" id="cd01428">
    <property type="entry name" value="ADK"/>
    <property type="match status" value="1"/>
</dbReference>
<dbReference type="FunFam" id="3.40.50.300:FF:000315">
    <property type="entry name" value="Adenylate kinase 1"/>
    <property type="match status" value="1"/>
</dbReference>
<dbReference type="Gene3D" id="3.40.50.300">
    <property type="entry name" value="P-loop containing nucleotide triphosphate hydrolases"/>
    <property type="match status" value="1"/>
</dbReference>
<dbReference type="HAMAP" id="MF_00235">
    <property type="entry name" value="Adenylate_kinase_Adk"/>
    <property type="match status" value="1"/>
</dbReference>
<dbReference type="HAMAP" id="MF_03172">
    <property type="entry name" value="Adenylate_kinase_UMP_CMP_kin"/>
    <property type="match status" value="1"/>
</dbReference>
<dbReference type="InterPro" id="IPR000850">
    <property type="entry name" value="Adenylat/UMP-CMP_kin"/>
</dbReference>
<dbReference type="InterPro" id="IPR033690">
    <property type="entry name" value="Adenylat_kinase_CS"/>
</dbReference>
<dbReference type="InterPro" id="IPR027417">
    <property type="entry name" value="P-loop_NTPase"/>
</dbReference>
<dbReference type="InterPro" id="IPR006266">
    <property type="entry name" value="UMP_CMP_kinase"/>
</dbReference>
<dbReference type="NCBIfam" id="TIGR01359">
    <property type="entry name" value="UMP_CMP_kin_fam"/>
    <property type="match status" value="1"/>
</dbReference>
<dbReference type="PANTHER" id="PTHR23359">
    <property type="entry name" value="NUCLEOTIDE KINASE"/>
    <property type="match status" value="1"/>
</dbReference>
<dbReference type="Pfam" id="PF00406">
    <property type="entry name" value="ADK"/>
    <property type="match status" value="1"/>
</dbReference>
<dbReference type="PRINTS" id="PR00094">
    <property type="entry name" value="ADENYLTKNASE"/>
</dbReference>
<dbReference type="SUPFAM" id="SSF52540">
    <property type="entry name" value="P-loop containing nucleoside triphosphate hydrolases"/>
    <property type="match status" value="1"/>
</dbReference>
<dbReference type="PROSITE" id="PS00113">
    <property type="entry name" value="ADENYLATE_KINASE"/>
    <property type="match status" value="1"/>
</dbReference>
<sequence length="204" mass="23047">METPIDAPNKDEHECPRWKKSTVVFVLGGPGSGKGTQCANVVKHFSYTHFSAGDLLRAEIKSGSEFGAMIQSMIAEGRIVPSEITVKLLCKAMEESGNDKFLIDGFPRNEENRNVFENVARIEPAFVLFFDCPEEELERRIMSRNQGREDDNIETIKKRFKVFVESTLPIISYYESKGKLRKINAAKSSEEVFEAVRVLFASET</sequence>
<accession>Q8VY84</accession>
<accession>Q9M1C5</accession>
<reference key="1">
    <citation type="journal article" date="2000" name="Nature">
        <title>Sequence and analysis of chromosome 3 of the plant Arabidopsis thaliana.</title>
        <authorList>
            <person name="Salanoubat M."/>
            <person name="Lemcke K."/>
            <person name="Rieger M."/>
            <person name="Ansorge W."/>
            <person name="Unseld M."/>
            <person name="Fartmann B."/>
            <person name="Valle G."/>
            <person name="Bloecker H."/>
            <person name="Perez-Alonso M."/>
            <person name="Obermaier B."/>
            <person name="Delseny M."/>
            <person name="Boutry M."/>
            <person name="Grivell L.A."/>
            <person name="Mache R."/>
            <person name="Puigdomenech P."/>
            <person name="De Simone V."/>
            <person name="Choisne N."/>
            <person name="Artiguenave F."/>
            <person name="Robert C."/>
            <person name="Brottier P."/>
            <person name="Wincker P."/>
            <person name="Cattolico L."/>
            <person name="Weissenbach J."/>
            <person name="Saurin W."/>
            <person name="Quetier F."/>
            <person name="Schaefer M."/>
            <person name="Mueller-Auer S."/>
            <person name="Gabel C."/>
            <person name="Fuchs M."/>
            <person name="Benes V."/>
            <person name="Wurmbach E."/>
            <person name="Drzonek H."/>
            <person name="Erfle H."/>
            <person name="Jordan N."/>
            <person name="Bangert S."/>
            <person name="Wiedelmann R."/>
            <person name="Kranz H."/>
            <person name="Voss H."/>
            <person name="Holland R."/>
            <person name="Brandt P."/>
            <person name="Nyakatura G."/>
            <person name="Vezzi A."/>
            <person name="D'Angelo M."/>
            <person name="Pallavicini A."/>
            <person name="Toppo S."/>
            <person name="Simionati B."/>
            <person name="Conrad A."/>
            <person name="Hornischer K."/>
            <person name="Kauer G."/>
            <person name="Loehnert T.-H."/>
            <person name="Nordsiek G."/>
            <person name="Reichelt J."/>
            <person name="Scharfe M."/>
            <person name="Schoen O."/>
            <person name="Bargues M."/>
            <person name="Terol J."/>
            <person name="Climent J."/>
            <person name="Navarro P."/>
            <person name="Collado C."/>
            <person name="Perez-Perez A."/>
            <person name="Ottenwaelder B."/>
            <person name="Duchemin D."/>
            <person name="Cooke R."/>
            <person name="Laudie M."/>
            <person name="Berger-Llauro C."/>
            <person name="Purnelle B."/>
            <person name="Masuy D."/>
            <person name="de Haan M."/>
            <person name="Maarse A.C."/>
            <person name="Alcaraz J.-P."/>
            <person name="Cottet A."/>
            <person name="Casacuberta E."/>
            <person name="Monfort A."/>
            <person name="Argiriou A."/>
            <person name="Flores M."/>
            <person name="Liguori R."/>
            <person name="Vitale D."/>
            <person name="Mannhaupt G."/>
            <person name="Haase D."/>
            <person name="Schoof H."/>
            <person name="Rudd S."/>
            <person name="Zaccaria P."/>
            <person name="Mewes H.-W."/>
            <person name="Mayer K.F.X."/>
            <person name="Kaul S."/>
            <person name="Town C.D."/>
            <person name="Koo H.L."/>
            <person name="Tallon L.J."/>
            <person name="Jenkins J."/>
            <person name="Rooney T."/>
            <person name="Rizzo M."/>
            <person name="Walts A."/>
            <person name="Utterback T."/>
            <person name="Fujii C.Y."/>
            <person name="Shea T.P."/>
            <person name="Creasy T.H."/>
            <person name="Haas B."/>
            <person name="Maiti R."/>
            <person name="Wu D."/>
            <person name="Peterson J."/>
            <person name="Van Aken S."/>
            <person name="Pai G."/>
            <person name="Militscher J."/>
            <person name="Sellers P."/>
            <person name="Gill J.E."/>
            <person name="Feldblyum T.V."/>
            <person name="Preuss D."/>
            <person name="Lin X."/>
            <person name="Nierman W.C."/>
            <person name="Salzberg S.L."/>
            <person name="White O."/>
            <person name="Venter J.C."/>
            <person name="Fraser C.M."/>
            <person name="Kaneko T."/>
            <person name="Nakamura Y."/>
            <person name="Sato S."/>
            <person name="Kato T."/>
            <person name="Asamizu E."/>
            <person name="Sasamoto S."/>
            <person name="Kimura T."/>
            <person name="Idesawa K."/>
            <person name="Kawashima K."/>
            <person name="Kishida Y."/>
            <person name="Kiyokawa C."/>
            <person name="Kohara M."/>
            <person name="Matsumoto M."/>
            <person name="Matsuno A."/>
            <person name="Muraki A."/>
            <person name="Nakayama S."/>
            <person name="Nakazaki N."/>
            <person name="Shinpo S."/>
            <person name="Takeuchi C."/>
            <person name="Wada T."/>
            <person name="Watanabe A."/>
            <person name="Yamada M."/>
            <person name="Yasuda M."/>
            <person name="Tabata S."/>
        </authorList>
    </citation>
    <scope>NUCLEOTIDE SEQUENCE [LARGE SCALE GENOMIC DNA]</scope>
    <source>
        <strain>cv. Columbia</strain>
    </source>
</reference>
<reference key="2">
    <citation type="journal article" date="2017" name="Plant J.">
        <title>Araport11: a complete reannotation of the Arabidopsis thaliana reference genome.</title>
        <authorList>
            <person name="Cheng C.Y."/>
            <person name="Krishnakumar V."/>
            <person name="Chan A.P."/>
            <person name="Thibaud-Nissen F."/>
            <person name="Schobel S."/>
            <person name="Town C.D."/>
        </authorList>
    </citation>
    <scope>GENOME REANNOTATION</scope>
    <source>
        <strain>cv. Columbia</strain>
    </source>
</reference>
<reference key="3">
    <citation type="journal article" date="2003" name="Science">
        <title>Empirical analysis of transcriptional activity in the Arabidopsis genome.</title>
        <authorList>
            <person name="Yamada K."/>
            <person name="Lim J."/>
            <person name="Dale J.M."/>
            <person name="Chen H."/>
            <person name="Shinn P."/>
            <person name="Palm C.J."/>
            <person name="Southwick A.M."/>
            <person name="Wu H.C."/>
            <person name="Kim C.J."/>
            <person name="Nguyen M."/>
            <person name="Pham P.K."/>
            <person name="Cheuk R.F."/>
            <person name="Karlin-Newmann G."/>
            <person name="Liu S.X."/>
            <person name="Lam B."/>
            <person name="Sakano H."/>
            <person name="Wu T."/>
            <person name="Yu G."/>
            <person name="Miranda M."/>
            <person name="Quach H.L."/>
            <person name="Tripp M."/>
            <person name="Chang C.H."/>
            <person name="Lee J.M."/>
            <person name="Toriumi M.J."/>
            <person name="Chan M.M."/>
            <person name="Tang C.C."/>
            <person name="Onodera C.S."/>
            <person name="Deng J.M."/>
            <person name="Akiyama K."/>
            <person name="Ansari Y."/>
            <person name="Arakawa T."/>
            <person name="Banh J."/>
            <person name="Banno F."/>
            <person name="Bowser L."/>
            <person name="Brooks S.Y."/>
            <person name="Carninci P."/>
            <person name="Chao Q."/>
            <person name="Choy N."/>
            <person name="Enju A."/>
            <person name="Goldsmith A.D."/>
            <person name="Gurjal M."/>
            <person name="Hansen N.F."/>
            <person name="Hayashizaki Y."/>
            <person name="Johnson-Hopson C."/>
            <person name="Hsuan V.W."/>
            <person name="Iida K."/>
            <person name="Karnes M."/>
            <person name="Khan S."/>
            <person name="Koesema E."/>
            <person name="Ishida J."/>
            <person name="Jiang P.X."/>
            <person name="Jones T."/>
            <person name="Kawai J."/>
            <person name="Kamiya A."/>
            <person name="Meyers C."/>
            <person name="Nakajima M."/>
            <person name="Narusaka M."/>
            <person name="Seki M."/>
            <person name="Sakurai T."/>
            <person name="Satou M."/>
            <person name="Tamse R."/>
            <person name="Vaysberg M."/>
            <person name="Wallender E.K."/>
            <person name="Wong C."/>
            <person name="Yamamura Y."/>
            <person name="Yuan S."/>
            <person name="Shinozaki K."/>
            <person name="Davis R.W."/>
            <person name="Theologis A."/>
            <person name="Ecker J.R."/>
        </authorList>
    </citation>
    <scope>NUCLEOTIDE SEQUENCE [LARGE SCALE MRNA]</scope>
    <source>
        <strain>cv. Columbia</strain>
    </source>
</reference>
<comment type="function">
    <text evidence="1">Catalyzes the phosphorylation of pyrimidine nucleoside monophosphates at the expense of ATP. Plays an important role in de novo pyrimidine nucleotide biosynthesis. Has preference for UMP and CMP as phosphate acceptors.</text>
</comment>
<comment type="catalytic activity">
    <reaction evidence="1">
        <text>CMP + ATP = CDP + ADP</text>
        <dbReference type="Rhea" id="RHEA:11600"/>
        <dbReference type="ChEBI" id="CHEBI:30616"/>
        <dbReference type="ChEBI" id="CHEBI:58069"/>
        <dbReference type="ChEBI" id="CHEBI:60377"/>
        <dbReference type="ChEBI" id="CHEBI:456216"/>
        <dbReference type="EC" id="2.7.4.14"/>
    </reaction>
</comment>
<comment type="catalytic activity">
    <reaction evidence="1">
        <text>dCMP + ATP = dCDP + ADP</text>
        <dbReference type="Rhea" id="RHEA:25094"/>
        <dbReference type="ChEBI" id="CHEBI:30616"/>
        <dbReference type="ChEBI" id="CHEBI:57566"/>
        <dbReference type="ChEBI" id="CHEBI:58593"/>
        <dbReference type="ChEBI" id="CHEBI:456216"/>
        <dbReference type="EC" id="2.7.4.14"/>
    </reaction>
</comment>
<comment type="catalytic activity">
    <reaction evidence="1">
        <text>UMP + ATP = UDP + ADP</text>
        <dbReference type="Rhea" id="RHEA:24400"/>
        <dbReference type="ChEBI" id="CHEBI:30616"/>
        <dbReference type="ChEBI" id="CHEBI:57865"/>
        <dbReference type="ChEBI" id="CHEBI:58223"/>
        <dbReference type="ChEBI" id="CHEBI:456216"/>
        <dbReference type="EC" id="2.7.4.14"/>
    </reaction>
</comment>
<comment type="cofactor">
    <cofactor evidence="1">
        <name>Mg(2+)</name>
        <dbReference type="ChEBI" id="CHEBI:18420"/>
    </cofactor>
    <text evidence="1">Binds 1 Mg(2+) ion per monomer.</text>
</comment>
<comment type="subunit">
    <text evidence="1">Monomer.</text>
</comment>
<comment type="subcellular location">
    <subcellularLocation>
        <location evidence="1">Cytoplasm</location>
    </subcellularLocation>
    <subcellularLocation>
        <location evidence="1">Nucleus</location>
    </subcellularLocation>
</comment>
<comment type="domain">
    <text evidence="1">Consists of three domains, a large central CORE domain and two small peripheral domains, NMPbind and LID, which undergo movements during catalysis. The LID domain closes over the site of phosphoryl transfer upon ATP binding. Assembling and dissambling the active center during each catalytic cycle provides an effective means to prevent ATP hydrolysis.</text>
</comment>
<comment type="similarity">
    <text evidence="1">Belongs to the adenylate kinase family. UMP-CMP kinase subfamily.</text>
</comment>
<comment type="sequence caution" evidence="2">
    <conflict type="erroneous gene model prediction">
        <sequence resource="EMBL-CDS" id="CAB75933"/>
    </conflict>
</comment>
<feature type="chain" id="PRO_0000425983" description="Probable UMP-CMP kinase 1">
    <location>
        <begin position="1"/>
        <end position="204"/>
    </location>
</feature>
<feature type="region of interest" description="NMP" evidence="1">
    <location>
        <begin position="51"/>
        <end position="80"/>
    </location>
</feature>
<feature type="region of interest" description="LID" evidence="1">
    <location>
        <begin position="143"/>
        <end position="151"/>
    </location>
</feature>
<feature type="binding site" evidence="1">
    <location>
        <begin position="31"/>
        <end position="36"/>
    </location>
    <ligand>
        <name>ATP</name>
        <dbReference type="ChEBI" id="CHEBI:30616"/>
    </ligand>
</feature>
<feature type="binding site" evidence="1">
    <location>
        <position position="57"/>
    </location>
    <ligand>
        <name>a ribonucleoside 5'-phosphate</name>
        <dbReference type="ChEBI" id="CHEBI:58043"/>
    </ligand>
</feature>
<feature type="binding site" evidence="1">
    <location>
        <begin position="78"/>
        <end position="80"/>
    </location>
    <ligand>
        <name>a ribonucleoside 5'-phosphate</name>
        <dbReference type="ChEBI" id="CHEBI:58043"/>
    </ligand>
</feature>
<feature type="binding site" evidence="1">
    <location>
        <begin position="105"/>
        <end position="108"/>
    </location>
    <ligand>
        <name>a ribonucleoside 5'-phosphate</name>
        <dbReference type="ChEBI" id="CHEBI:58043"/>
    </ligand>
</feature>
<feature type="binding site" evidence="1">
    <location>
        <position position="112"/>
    </location>
    <ligand>
        <name>CMP</name>
        <dbReference type="ChEBI" id="CHEBI:60377"/>
    </ligand>
</feature>
<feature type="binding site" evidence="1">
    <location>
        <position position="144"/>
    </location>
    <ligand>
        <name>ATP</name>
        <dbReference type="ChEBI" id="CHEBI:30616"/>
    </ligand>
</feature>
<feature type="binding site" evidence="1">
    <location>
        <position position="148"/>
    </location>
    <ligand>
        <name>a ribonucleoside 5'-phosphate</name>
        <dbReference type="ChEBI" id="CHEBI:58043"/>
    </ligand>
</feature>
<feature type="binding site" evidence="1">
    <location>
        <position position="159"/>
    </location>
    <ligand>
        <name>a ribonucleoside 5'-phosphate</name>
        <dbReference type="ChEBI" id="CHEBI:58043"/>
    </ligand>
</feature>
<feature type="binding site" evidence="1">
    <location>
        <position position="187"/>
    </location>
    <ligand>
        <name>ATP</name>
        <dbReference type="ChEBI" id="CHEBI:30616"/>
    </ligand>
</feature>
<protein>
    <recommendedName>
        <fullName>Probable UMP-CMP kinase 1</fullName>
        <ecNumber evidence="1">2.7.4.14</ecNumber>
    </recommendedName>
    <alternativeName>
        <fullName evidence="1">Deoxycytidylate kinase</fullName>
        <shortName evidence="1">CK</shortName>
        <shortName evidence="1">dCMP kinase</shortName>
    </alternativeName>
    <alternativeName>
        <fullName evidence="1">Uridine monophosphate/cytidine monophosphate kinase</fullName>
        <shortName evidence="1">UMP/CMP kinase</shortName>
        <shortName evidence="1">UMP/CMPK</shortName>
    </alternativeName>
</protein>
<keyword id="KW-0067">ATP-binding</keyword>
<keyword id="KW-0963">Cytoplasm</keyword>
<keyword id="KW-0418">Kinase</keyword>
<keyword id="KW-0547">Nucleotide-binding</keyword>
<keyword id="KW-0539">Nucleus</keyword>
<keyword id="KW-0665">Pyrimidine biosynthesis</keyword>
<keyword id="KW-1185">Reference proteome</keyword>
<keyword id="KW-0808">Transferase</keyword>
<gene>
    <name type="primary">UMK1</name>
    <name type="ordered locus">At3g60180</name>
    <name type="ORF">T2O9.160</name>
</gene>